<name>RBSD_LATSS</name>
<organism>
    <name type="scientific">Latilactobacillus sakei subsp. sakei (strain 23K)</name>
    <name type="common">Lactobacillus sakei subsp. sakei</name>
    <dbReference type="NCBI Taxonomy" id="314315"/>
    <lineage>
        <taxon>Bacteria</taxon>
        <taxon>Bacillati</taxon>
        <taxon>Bacillota</taxon>
        <taxon>Bacilli</taxon>
        <taxon>Lactobacillales</taxon>
        <taxon>Lactobacillaceae</taxon>
        <taxon>Latilactobacillus</taxon>
    </lineage>
</organism>
<dbReference type="EC" id="5.4.99.62" evidence="1"/>
<dbReference type="EMBL" id="AF115391">
    <property type="protein sequence ID" value="AAD34337.1"/>
    <property type="molecule type" value="Genomic_DNA"/>
</dbReference>
<dbReference type="EMBL" id="CR936503">
    <property type="protein sequence ID" value="CAI54498.1"/>
    <property type="molecule type" value="Genomic_DNA"/>
</dbReference>
<dbReference type="RefSeq" id="WP_011373911.1">
    <property type="nucleotide sequence ID" value="NC_007576.1"/>
</dbReference>
<dbReference type="SMR" id="Q38Z79"/>
<dbReference type="STRING" id="314315.LCA_0201"/>
<dbReference type="KEGG" id="lsa:LCA_0201"/>
<dbReference type="eggNOG" id="COG1869">
    <property type="taxonomic scope" value="Bacteria"/>
</dbReference>
<dbReference type="HOGENOM" id="CLU_135498_0_0_9"/>
<dbReference type="OrthoDB" id="9805009at2"/>
<dbReference type="UniPathway" id="UPA00916">
    <property type="reaction ID" value="UER00888"/>
</dbReference>
<dbReference type="Proteomes" id="UP000002707">
    <property type="component" value="Chromosome"/>
</dbReference>
<dbReference type="GO" id="GO:0005829">
    <property type="term" value="C:cytosol"/>
    <property type="evidence" value="ECO:0007669"/>
    <property type="project" value="TreeGrafter"/>
</dbReference>
<dbReference type="GO" id="GO:0062193">
    <property type="term" value="F:D-ribose pyranase activity"/>
    <property type="evidence" value="ECO:0007669"/>
    <property type="project" value="UniProtKB-EC"/>
</dbReference>
<dbReference type="GO" id="GO:0016872">
    <property type="term" value="F:intramolecular lyase activity"/>
    <property type="evidence" value="ECO:0007669"/>
    <property type="project" value="UniProtKB-UniRule"/>
</dbReference>
<dbReference type="GO" id="GO:0048029">
    <property type="term" value="F:monosaccharide binding"/>
    <property type="evidence" value="ECO:0007669"/>
    <property type="project" value="InterPro"/>
</dbReference>
<dbReference type="GO" id="GO:0019303">
    <property type="term" value="P:D-ribose catabolic process"/>
    <property type="evidence" value="ECO:0007669"/>
    <property type="project" value="UniProtKB-UniRule"/>
</dbReference>
<dbReference type="Gene3D" id="3.40.1650.10">
    <property type="entry name" value="RbsD-like domain"/>
    <property type="match status" value="1"/>
</dbReference>
<dbReference type="HAMAP" id="MF_01661">
    <property type="entry name" value="D_rib_pyranase"/>
    <property type="match status" value="1"/>
</dbReference>
<dbReference type="InterPro" id="IPR023064">
    <property type="entry name" value="D-ribose_pyranase"/>
</dbReference>
<dbReference type="InterPro" id="IPR023750">
    <property type="entry name" value="RbsD-like_sf"/>
</dbReference>
<dbReference type="InterPro" id="IPR007721">
    <property type="entry name" value="RbsD_FucU"/>
</dbReference>
<dbReference type="NCBIfam" id="NF008761">
    <property type="entry name" value="PRK11797.1"/>
    <property type="match status" value="1"/>
</dbReference>
<dbReference type="PANTHER" id="PTHR37831">
    <property type="entry name" value="D-RIBOSE PYRANASE"/>
    <property type="match status" value="1"/>
</dbReference>
<dbReference type="PANTHER" id="PTHR37831:SF1">
    <property type="entry name" value="D-RIBOSE PYRANASE"/>
    <property type="match status" value="1"/>
</dbReference>
<dbReference type="Pfam" id="PF05025">
    <property type="entry name" value="RbsD_FucU"/>
    <property type="match status" value="1"/>
</dbReference>
<dbReference type="SUPFAM" id="SSF102546">
    <property type="entry name" value="RbsD-like"/>
    <property type="match status" value="1"/>
</dbReference>
<reference key="1">
    <citation type="journal article" date="1999" name="J. Mol. Microbiol. Biotechnol.">
        <title>Ribose utilization in Lactobacillus sakei: analysis of the regulation of the rbs operon and putative involvement of a new transporter.</title>
        <authorList>
            <person name="Stentz R."/>
            <person name="Zagorec M."/>
        </authorList>
    </citation>
    <scope>NUCLEOTIDE SEQUENCE [GENOMIC DNA]</scope>
</reference>
<reference key="2">
    <citation type="journal article" date="2005" name="Nat. Biotechnol.">
        <title>The complete genome sequence of the meat-borne lactic acid bacterium Lactobacillus sakei 23K.</title>
        <authorList>
            <person name="Chaillou S."/>
            <person name="Champomier-Verges M.-C."/>
            <person name="Cornet M."/>
            <person name="Crutz-Le Coq A.-M."/>
            <person name="Dudez A.-M."/>
            <person name="Martin V."/>
            <person name="Beaufils S."/>
            <person name="Darbon-Rongere E."/>
            <person name="Bossy R."/>
            <person name="Loux V."/>
            <person name="Zagorec M."/>
        </authorList>
    </citation>
    <scope>NUCLEOTIDE SEQUENCE [LARGE SCALE GENOMIC DNA]</scope>
    <source>
        <strain>23K</strain>
    </source>
</reference>
<proteinExistence type="inferred from homology"/>
<accession>Q38Z79</accession>
<accession>Q9X4M4</accession>
<gene>
    <name evidence="1" type="primary">rbsD</name>
    <name type="ordered locus">LCA_0201</name>
</gene>
<keyword id="KW-0119">Carbohydrate metabolism</keyword>
<keyword id="KW-0963">Cytoplasm</keyword>
<keyword id="KW-0413">Isomerase</keyword>
<keyword id="KW-1185">Reference proteome</keyword>
<evidence type="ECO:0000255" key="1">
    <source>
        <dbReference type="HAMAP-Rule" id="MF_01661"/>
    </source>
</evidence>
<feature type="chain" id="PRO_0000346221" description="D-ribose pyranase">
    <location>
        <begin position="1"/>
        <end position="131"/>
    </location>
</feature>
<feature type="active site" description="Proton donor" evidence="1">
    <location>
        <position position="20"/>
    </location>
</feature>
<feature type="binding site" evidence="1">
    <location>
        <position position="28"/>
    </location>
    <ligand>
        <name>substrate</name>
    </ligand>
</feature>
<feature type="binding site" evidence="1">
    <location>
        <position position="98"/>
    </location>
    <ligand>
        <name>substrate</name>
    </ligand>
</feature>
<feature type="binding site" evidence="1">
    <location>
        <begin position="120"/>
        <end position="122"/>
    </location>
    <ligand>
        <name>substrate</name>
    </ligand>
</feature>
<comment type="function">
    <text evidence="1">Catalyzes the interconversion of beta-pyran and beta-furan forms of D-ribose.</text>
</comment>
<comment type="catalytic activity">
    <reaction evidence="1">
        <text>beta-D-ribopyranose = beta-D-ribofuranose</text>
        <dbReference type="Rhea" id="RHEA:25432"/>
        <dbReference type="ChEBI" id="CHEBI:27476"/>
        <dbReference type="ChEBI" id="CHEBI:47002"/>
        <dbReference type="EC" id="5.4.99.62"/>
    </reaction>
</comment>
<comment type="pathway">
    <text evidence="1">Carbohydrate metabolism; D-ribose degradation; D-ribose 5-phosphate from beta-D-ribopyranose: step 1/2.</text>
</comment>
<comment type="subunit">
    <text evidence="1">Homodecamer.</text>
</comment>
<comment type="subcellular location">
    <subcellularLocation>
        <location evidence="1">Cytoplasm</location>
    </subcellularLocation>
</comment>
<comment type="similarity">
    <text evidence="1">Belongs to the RbsD / FucU family. RbsD subfamily.</text>
</comment>
<sequence length="131" mass="14303">MRKTKVINTQISSVISDMGHFDTLSIGDAGMPVPVGTKKIDVAIENGVPSFIQVLTNILSELEVQKVYLANEIKTANPEQLAAIKALIGETPIEFIDHSQMKQDLNKAKAFVRTGEMTPYSNIILESGVVF</sequence>
<protein>
    <recommendedName>
        <fullName evidence="1">D-ribose pyranase</fullName>
        <ecNumber evidence="1">5.4.99.62</ecNumber>
    </recommendedName>
</protein>